<comment type="similarity">
    <text evidence="1">Belongs to the PPR family. P subfamily.</text>
</comment>
<comment type="sequence caution" evidence="1">
    <conflict type="erroneous initiation">
        <sequence resource="EMBL-CDS" id="AAM67288"/>
    </conflict>
</comment>
<comment type="sequence caution" evidence="1">
    <conflict type="erroneous gene model prediction">
        <sequence resource="EMBL-CDS" id="BAB08912"/>
    </conflict>
</comment>
<comment type="online information" name="Pentatricopeptide repeat proteins">
    <link uri="https://ppr.plantenergy.uwa.edu.au"/>
</comment>
<reference key="1">
    <citation type="journal article" date="1998" name="DNA Res.">
        <title>Structural analysis of Arabidopsis thaliana chromosome 5. VIII. Sequence features of the regions of 1,081,958 bp covered by seventeen physically assigned P1 and TAC clones.</title>
        <authorList>
            <person name="Asamizu E."/>
            <person name="Sato S."/>
            <person name="Kaneko T."/>
            <person name="Nakamura Y."/>
            <person name="Kotani H."/>
            <person name="Miyajima N."/>
            <person name="Tabata S."/>
        </authorList>
    </citation>
    <scope>NUCLEOTIDE SEQUENCE [LARGE SCALE GENOMIC DNA]</scope>
    <source>
        <strain>cv. Columbia</strain>
    </source>
</reference>
<reference key="2">
    <citation type="journal article" date="2017" name="Plant J.">
        <title>Araport11: a complete reannotation of the Arabidopsis thaliana reference genome.</title>
        <authorList>
            <person name="Cheng C.Y."/>
            <person name="Krishnakumar V."/>
            <person name="Chan A.P."/>
            <person name="Thibaud-Nissen F."/>
            <person name="Schobel S."/>
            <person name="Town C.D."/>
        </authorList>
    </citation>
    <scope>GENOME REANNOTATION</scope>
    <source>
        <strain>cv. Columbia</strain>
    </source>
</reference>
<reference key="3">
    <citation type="submission" date="2005-03" db="EMBL/GenBank/DDBJ databases">
        <title>Large-scale analysis of RIKEN Arabidopsis full-length (RAFL) cDNAs.</title>
        <authorList>
            <person name="Totoki Y."/>
            <person name="Seki M."/>
            <person name="Ishida J."/>
            <person name="Nakajima M."/>
            <person name="Enju A."/>
            <person name="Kamiya A."/>
            <person name="Narusaka M."/>
            <person name="Shin-i T."/>
            <person name="Nakagawa M."/>
            <person name="Sakamoto N."/>
            <person name="Oishi K."/>
            <person name="Kohara Y."/>
            <person name="Kobayashi M."/>
            <person name="Toyoda A."/>
            <person name="Sakaki Y."/>
            <person name="Sakurai T."/>
            <person name="Iida K."/>
            <person name="Akiyama K."/>
            <person name="Satou M."/>
            <person name="Toyoda T."/>
            <person name="Konagaya A."/>
            <person name="Carninci P."/>
            <person name="Kawai J."/>
            <person name="Hayashizaki Y."/>
            <person name="Shinozaki K."/>
        </authorList>
    </citation>
    <scope>NUCLEOTIDE SEQUENCE [LARGE SCALE MRNA]</scope>
    <source>
        <strain>cv. Columbia</strain>
    </source>
</reference>
<reference key="4">
    <citation type="submission" date="2002-03" db="EMBL/GenBank/DDBJ databases">
        <title>Full-length cDNA from Arabidopsis thaliana.</title>
        <authorList>
            <person name="Brover V.V."/>
            <person name="Troukhan M.E."/>
            <person name="Alexandrov N.A."/>
            <person name="Lu Y.-P."/>
            <person name="Flavell R.B."/>
            <person name="Feldmann K.A."/>
        </authorList>
    </citation>
    <scope>NUCLEOTIDE SEQUENCE [LARGE SCALE MRNA]</scope>
</reference>
<reference key="5">
    <citation type="journal article" date="2004" name="Plant Cell">
        <title>Genome-wide analysis of Arabidopsis pentatricopeptide repeat proteins reveals their essential role in organelle biogenesis.</title>
        <authorList>
            <person name="Lurin C."/>
            <person name="Andres C."/>
            <person name="Aubourg S."/>
            <person name="Bellaoui M."/>
            <person name="Bitton F."/>
            <person name="Bruyere C."/>
            <person name="Caboche M."/>
            <person name="Debast C."/>
            <person name="Gualberto J."/>
            <person name="Hoffmann B."/>
            <person name="Lecharny A."/>
            <person name="Le Ret M."/>
            <person name="Martin-Magniette M.-L."/>
            <person name="Mireau H."/>
            <person name="Peeters N."/>
            <person name="Renou J.-P."/>
            <person name="Szurek B."/>
            <person name="Taconnat L."/>
            <person name="Small I."/>
        </authorList>
    </citation>
    <scope>GENE FAMILY</scope>
</reference>
<protein>
    <recommendedName>
        <fullName>Pentatricopeptide repeat-containing protein At5g46680</fullName>
    </recommendedName>
</protein>
<dbReference type="EMBL" id="AB016882">
    <property type="protein sequence ID" value="BAB08912.1"/>
    <property type="status" value="ALT_SEQ"/>
    <property type="molecule type" value="Genomic_DNA"/>
</dbReference>
<dbReference type="EMBL" id="CP002688">
    <property type="protein sequence ID" value="AED95413.1"/>
    <property type="molecule type" value="Genomic_DNA"/>
</dbReference>
<dbReference type="EMBL" id="AK221607">
    <property type="protein sequence ID" value="BAD95174.1"/>
    <property type="molecule type" value="mRNA"/>
</dbReference>
<dbReference type="EMBL" id="AY084563">
    <property type="protein sequence ID" value="AAM67288.1"/>
    <property type="status" value="ALT_INIT"/>
    <property type="molecule type" value="mRNA"/>
</dbReference>
<dbReference type="RefSeq" id="NP_568665.1">
    <property type="nucleotide sequence ID" value="NM_124038.4"/>
</dbReference>
<dbReference type="SMR" id="Q56XR6"/>
<dbReference type="FunCoup" id="Q56XR6">
    <property type="interactions" value="5"/>
</dbReference>
<dbReference type="GlyGen" id="Q56XR6">
    <property type="glycosylation" value="1 site"/>
</dbReference>
<dbReference type="iPTMnet" id="Q56XR6"/>
<dbReference type="PaxDb" id="3702-AT5G46680.1"/>
<dbReference type="EnsemblPlants" id="AT5G46680.1">
    <property type="protein sequence ID" value="AT5G46680.1"/>
    <property type="gene ID" value="AT5G46680"/>
</dbReference>
<dbReference type="GeneID" id="834711"/>
<dbReference type="Gramene" id="AT5G46680.1">
    <property type="protein sequence ID" value="AT5G46680.1"/>
    <property type="gene ID" value="AT5G46680"/>
</dbReference>
<dbReference type="KEGG" id="ath:AT5G46680"/>
<dbReference type="Araport" id="AT5G46680"/>
<dbReference type="TAIR" id="AT5G46680"/>
<dbReference type="eggNOG" id="KOG4197">
    <property type="taxonomic scope" value="Eukaryota"/>
</dbReference>
<dbReference type="HOGENOM" id="CLU_002706_49_0_1"/>
<dbReference type="InParanoid" id="Q56XR6"/>
<dbReference type="OMA" id="HTDNAIE"/>
<dbReference type="OrthoDB" id="185373at2759"/>
<dbReference type="PhylomeDB" id="Q56XR6"/>
<dbReference type="PRO" id="PR:Q56XR6"/>
<dbReference type="Proteomes" id="UP000006548">
    <property type="component" value="Chromosome 5"/>
</dbReference>
<dbReference type="ExpressionAtlas" id="Q56XR6">
    <property type="expression patterns" value="baseline and differential"/>
</dbReference>
<dbReference type="Gene3D" id="1.25.40.10">
    <property type="entry name" value="Tetratricopeptide repeat domain"/>
    <property type="match status" value="3"/>
</dbReference>
<dbReference type="InterPro" id="IPR002885">
    <property type="entry name" value="Pentatricopeptide_rpt"/>
</dbReference>
<dbReference type="InterPro" id="IPR051222">
    <property type="entry name" value="PPR/CCM1_RNA-binding"/>
</dbReference>
<dbReference type="InterPro" id="IPR011990">
    <property type="entry name" value="TPR-like_helical_dom_sf"/>
</dbReference>
<dbReference type="NCBIfam" id="TIGR00756">
    <property type="entry name" value="PPR"/>
    <property type="match status" value="8"/>
</dbReference>
<dbReference type="PANTHER" id="PTHR47942:SF16">
    <property type="entry name" value="PENTATRICOPEPTIDE REPEAT DOMAIN CONTAINING PROTEIN-RELATED"/>
    <property type="match status" value="1"/>
</dbReference>
<dbReference type="PANTHER" id="PTHR47942">
    <property type="entry name" value="TETRATRICOPEPTIDE REPEAT (TPR)-LIKE SUPERFAMILY PROTEIN-RELATED"/>
    <property type="match status" value="1"/>
</dbReference>
<dbReference type="Pfam" id="PF01535">
    <property type="entry name" value="PPR"/>
    <property type="match status" value="1"/>
</dbReference>
<dbReference type="Pfam" id="PF12854">
    <property type="entry name" value="PPR_1"/>
    <property type="match status" value="1"/>
</dbReference>
<dbReference type="Pfam" id="PF13041">
    <property type="entry name" value="PPR_2"/>
    <property type="match status" value="5"/>
</dbReference>
<dbReference type="SUPFAM" id="SSF81901">
    <property type="entry name" value="HCP-like"/>
    <property type="match status" value="1"/>
</dbReference>
<dbReference type="PROSITE" id="PS51375">
    <property type="entry name" value="PPR"/>
    <property type="match status" value="12"/>
</dbReference>
<evidence type="ECO:0000305" key="1"/>
<name>PP421_ARATH</name>
<proteinExistence type="evidence at transcript level"/>
<feature type="chain" id="PRO_0000363558" description="Pentatricopeptide repeat-containing protein At5g46680">
    <location>
        <begin position="1"/>
        <end position="468"/>
    </location>
</feature>
<feature type="repeat" description="PPR 1">
    <location>
        <begin position="12"/>
        <end position="46"/>
    </location>
</feature>
<feature type="repeat" description="PPR 2">
    <location>
        <begin position="47"/>
        <end position="81"/>
    </location>
</feature>
<feature type="repeat" description="PPR 3">
    <location>
        <begin position="82"/>
        <end position="116"/>
    </location>
</feature>
<feature type="repeat" description="PPR 4">
    <location>
        <begin position="117"/>
        <end position="152"/>
    </location>
</feature>
<feature type="repeat" description="PPR 5">
    <location>
        <begin position="153"/>
        <end position="183"/>
    </location>
</feature>
<feature type="repeat" description="PPR 6">
    <location>
        <begin position="187"/>
        <end position="221"/>
    </location>
</feature>
<feature type="repeat" description="PPR 7">
    <location>
        <begin position="222"/>
        <end position="256"/>
    </location>
</feature>
<feature type="repeat" description="PPR 8">
    <location>
        <begin position="257"/>
        <end position="291"/>
    </location>
</feature>
<feature type="repeat" description="PPR 9">
    <location>
        <begin position="293"/>
        <end position="327"/>
    </location>
</feature>
<feature type="repeat" description="PPR 10">
    <location>
        <begin position="328"/>
        <end position="362"/>
    </location>
</feature>
<feature type="repeat" description="PPR 11">
    <location>
        <begin position="363"/>
        <end position="393"/>
    </location>
</feature>
<feature type="repeat" description="PPR 12">
    <location>
        <begin position="394"/>
        <end position="428"/>
    </location>
</feature>
<feature type="sequence conflict" description="In Ref. 3; BAD95174." evidence="1" ref="3">
    <original>M</original>
    <variation>V</variation>
    <location>
        <position position="98"/>
    </location>
</feature>
<gene>
    <name type="ordered locus">At5g46680</name>
    <name type="ORF">MZA15.9</name>
</gene>
<organism>
    <name type="scientific">Arabidopsis thaliana</name>
    <name type="common">Mouse-ear cress</name>
    <dbReference type="NCBI Taxonomy" id="3702"/>
    <lineage>
        <taxon>Eukaryota</taxon>
        <taxon>Viridiplantae</taxon>
        <taxon>Streptophyta</taxon>
        <taxon>Embryophyta</taxon>
        <taxon>Tracheophyta</taxon>
        <taxon>Spermatophyta</taxon>
        <taxon>Magnoliopsida</taxon>
        <taxon>eudicotyledons</taxon>
        <taxon>Gunneridae</taxon>
        <taxon>Pentapetalae</taxon>
        <taxon>rosids</taxon>
        <taxon>malvids</taxon>
        <taxon>Brassicales</taxon>
        <taxon>Brassicaceae</taxon>
        <taxon>Camelineae</taxon>
        <taxon>Arabidopsis</taxon>
    </lineage>
</organism>
<sequence>MVRGLMKFPGISTKLLNISVNSLCKFRNLERAETLLIDGIRLGVLPDVITYNTLIKGYTRFIGIDEAYAVTRRMREAGIEPDVTTYNSLISGAAKNLMLNRVLQLFDEMLHSGLSPDMWSYNTLMSCYFKLGRHGEAFKILHEDIHLAGLVPGIDTYNILLDALCKSGHTDNAIELFKHLKSRVKPELMTYNILINGLCKSRRVGSVDWMMRELKKSGYTPNAVTYTTMLKMYFKTKRIEKGLQLFLKMKKEGYTFDGFANCAVVSALIKTGRAEEAYECMHELVRSGTRSQDIVSYNTLLNLYFKDGNLDAVDDLLEEIEMKGLKPDDYTHTIIVNGLLNIGNTGGAEKHLACIGEMGMQPSVVTCNCLIDGLCKAGHVDRAMRLFASMEVRDEFTYTSVVHNLCKDGRLVCASKLLLSCYNKGMKIPSSARRAVLSGIRETVSYQAARKTHIKIKAAIECNTLMYP</sequence>
<accession>Q56XR6</accession>
<accession>Q8LFY9</accession>
<accession>Q9FIQ7</accession>
<keyword id="KW-1185">Reference proteome</keyword>
<keyword id="KW-0677">Repeat</keyword>